<proteinExistence type="evidence at protein level"/>
<sequence length="420" mass="44455">MTMEKGMSSGEGLPSRSSQVSAGKITAKELETKQSYKEKRGGFVLVHAGAGYHSESKAKEYKHVCKRACQKAIEKLQAGALATDAVTAALVELEDSPFTNAGMGSNLNLLGEIECDASIMDGKSLNFGAVGALSGIKNPVSVANRLLCEGQKGKLSAGRIPPCFLVGEGAYRWAVDHGIPSCPPNIMTTRFSLAAFKRNKRKLELAERVDTDFMQLKKRRQSSEKENDSGTLDTVGAVVVDHEGNVAAAVSSGGLALKHPGRVGQAALYGCGCWAENTGAHNPYSTAVSTSGCGEHLVRTILARECSHALQAEDAHQALLETMQNKFISSPFLASEDGVLGGVIVLRSCRCSAEPDSSQNKQTLLVEFLWSHTTESMCVGYMSAQDGKAKTHISRLPPGAVAGQSVAIEGGVCRLESPVN</sequence>
<accession>Q9H6P5</accession>
<accession>B7Z690</accession>
<accession>B7Z963</accession>
<accession>Q5TDU9</accession>
<accession>Q9BQN0</accession>
<accession>Q9NQ08</accession>
<accession>Q9NTS6</accession>
<accession>Q9NXJ2</accession>
<organism>
    <name type="scientific">Homo sapiens</name>
    <name type="common">Human</name>
    <dbReference type="NCBI Taxonomy" id="9606"/>
    <lineage>
        <taxon>Eukaryota</taxon>
        <taxon>Metazoa</taxon>
        <taxon>Chordata</taxon>
        <taxon>Craniata</taxon>
        <taxon>Vertebrata</taxon>
        <taxon>Euteleostomi</taxon>
        <taxon>Mammalia</taxon>
        <taxon>Eutheria</taxon>
        <taxon>Euarchontoglires</taxon>
        <taxon>Primates</taxon>
        <taxon>Haplorrhini</taxon>
        <taxon>Catarrhini</taxon>
        <taxon>Hominidae</taxon>
        <taxon>Homo</taxon>
    </lineage>
</organism>
<name>TASP1_HUMAN</name>
<protein>
    <recommendedName>
        <fullName>Threonine aspartase 1</fullName>
        <shortName>Taspase-1</shortName>
        <ecNumber>3.4.25.-</ecNumber>
    </recommendedName>
    <component>
        <recommendedName>
            <fullName>Threonine aspartase subunit alpha</fullName>
        </recommendedName>
    </component>
    <component>
        <recommendedName>
            <fullName>Threonine aspartase subunit beta</fullName>
        </recommendedName>
    </component>
</protein>
<evidence type="ECO:0000250" key="1">
    <source>
        <dbReference type="UniProtKB" id="Q8R1G1"/>
    </source>
</evidence>
<evidence type="ECO:0000256" key="2">
    <source>
        <dbReference type="SAM" id="MobiDB-lite"/>
    </source>
</evidence>
<evidence type="ECO:0000269" key="3">
    <source>
    </source>
</evidence>
<evidence type="ECO:0000269" key="4">
    <source>
    </source>
</evidence>
<evidence type="ECO:0000269" key="5">
    <source>
    </source>
</evidence>
<evidence type="ECO:0000303" key="6">
    <source>
    </source>
</evidence>
<evidence type="ECO:0000305" key="7"/>
<evidence type="ECO:0000305" key="8">
    <source>
    </source>
</evidence>
<evidence type="ECO:0007829" key="9">
    <source>
        <dbReference type="PDB" id="2A8I"/>
    </source>
</evidence>
<evidence type="ECO:0007829" key="10">
    <source>
        <dbReference type="PDB" id="2A8J"/>
    </source>
</evidence>
<evidence type="ECO:0007829" key="11">
    <source>
        <dbReference type="PDB" id="6VIN"/>
    </source>
</evidence>
<feature type="chain" id="PRO_0000002350" description="Threonine aspartase subunit alpha">
    <location>
        <begin position="1"/>
        <end position="233"/>
    </location>
</feature>
<feature type="chain" id="PRO_0000002351" description="Threonine aspartase subunit beta">
    <location>
        <begin position="234"/>
        <end position="420"/>
    </location>
</feature>
<feature type="region of interest" description="Disordered" evidence="2">
    <location>
        <begin position="1"/>
        <end position="23"/>
    </location>
</feature>
<feature type="active site" description="Nucleophile" evidence="8">
    <location>
        <position position="234"/>
    </location>
</feature>
<feature type="splice variant" id="VSP_056327" description="In isoform 2." evidence="6">
    <original>DSPFTNAGMGSNLNLLGEIECDASIMDGKSLNFGA</original>
    <variation>VYTHSYTSWSCIQPSIHVLLVKRQRKSPLPRISTF</variation>
    <location>
        <begin position="95"/>
        <end position="129"/>
    </location>
</feature>
<feature type="splice variant" id="VSP_056533" description="In isoform 3." evidence="6">
    <original>SPFTNAGMGSNLNLLGEIECDASIMDGKSLNFGAVGALSGIKNPVSVANR</original>
    <variation>VESILCAPYWLENVHMLYKLRMLTKPCWRLCKTSLSVHLSLPVKMACLAE</variation>
    <location>
        <begin position="96"/>
        <end position="145"/>
    </location>
</feature>
<feature type="splice variant" id="VSP_056328" description="In isoform 2." evidence="6">
    <location>
        <begin position="130"/>
        <end position="420"/>
    </location>
</feature>
<feature type="splice variant" id="VSP_056534" description="In isoform 3." evidence="6">
    <location>
        <begin position="146"/>
        <end position="420"/>
    </location>
</feature>
<feature type="sequence variant" id="VAR_084461" description="In SULEHS." evidence="5">
    <location>
        <begin position="67"/>
        <end position="420"/>
    </location>
</feature>
<feature type="sequence variant" id="VAR_084462" description="In SULEHS; dbSNP:rs904200599." evidence="5">
    <original>T</original>
    <variation>M</variation>
    <location>
        <position position="234"/>
    </location>
</feature>
<feature type="mutagenesis site" description="0.1% enzymatic activity; no intramolecular processing." evidence="3 4">
    <original>D</original>
    <variation>A</variation>
    <location>
        <position position="233"/>
    </location>
</feature>
<feature type="mutagenesis site" description="Complete loss of enzymatic activity; no intramolecular processing." evidence="3">
    <original>T</original>
    <variation>A</variation>
    <location>
        <position position="234"/>
    </location>
</feature>
<feature type="sequence conflict" description="In Ref. 1; BAA91018." evidence="7" ref="1">
    <original>S</original>
    <variation>F</variation>
    <location>
        <position position="357"/>
    </location>
</feature>
<feature type="strand" evidence="10">
    <location>
        <begin position="42"/>
        <end position="52"/>
    </location>
</feature>
<feature type="helix" evidence="10">
    <location>
        <begin position="57"/>
        <end position="77"/>
    </location>
</feature>
<feature type="helix" evidence="10">
    <location>
        <begin position="82"/>
        <end position="95"/>
    </location>
</feature>
<feature type="strand" evidence="10">
    <location>
        <begin position="99"/>
        <end position="102"/>
    </location>
</feature>
<feature type="strand" evidence="10">
    <location>
        <begin position="115"/>
        <end position="121"/>
    </location>
</feature>
<feature type="turn" evidence="10">
    <location>
        <begin position="122"/>
        <end position="124"/>
    </location>
</feature>
<feature type="strand" evidence="10">
    <location>
        <begin position="127"/>
        <end position="133"/>
    </location>
</feature>
<feature type="strand" evidence="10">
    <location>
        <begin position="135"/>
        <end position="137"/>
    </location>
</feature>
<feature type="helix" evidence="10">
    <location>
        <begin position="139"/>
        <end position="151"/>
    </location>
</feature>
<feature type="turn" evidence="10">
    <location>
        <begin position="152"/>
        <end position="154"/>
    </location>
</feature>
<feature type="strand" evidence="11">
    <location>
        <begin position="157"/>
        <end position="160"/>
    </location>
</feature>
<feature type="strand" evidence="10">
    <location>
        <begin position="163"/>
        <end position="166"/>
    </location>
</feature>
<feature type="helix" evidence="10">
    <location>
        <begin position="167"/>
        <end position="176"/>
    </location>
</feature>
<feature type="helix" evidence="9">
    <location>
        <begin position="184"/>
        <end position="187"/>
    </location>
</feature>
<feature type="helix" evidence="9">
    <location>
        <begin position="190"/>
        <end position="204"/>
    </location>
</feature>
<feature type="turn" evidence="11">
    <location>
        <begin position="221"/>
        <end position="225"/>
    </location>
</feature>
<feature type="strand" evidence="10">
    <location>
        <begin position="235"/>
        <end position="241"/>
    </location>
</feature>
<feature type="strand" evidence="10">
    <location>
        <begin position="246"/>
        <end position="252"/>
    </location>
</feature>
<feature type="helix" evidence="10">
    <location>
        <begin position="265"/>
        <end position="267"/>
    </location>
</feature>
<feature type="turn" evidence="10">
    <location>
        <begin position="269"/>
        <end position="271"/>
    </location>
</feature>
<feature type="strand" evidence="10">
    <location>
        <begin position="272"/>
        <end position="276"/>
    </location>
</feature>
<feature type="strand" evidence="10">
    <location>
        <begin position="282"/>
        <end position="292"/>
    </location>
</feature>
<feature type="helix" evidence="10">
    <location>
        <begin position="294"/>
        <end position="299"/>
    </location>
</feature>
<feature type="helix" evidence="10">
    <location>
        <begin position="302"/>
        <end position="309"/>
    </location>
</feature>
<feature type="helix" evidence="10">
    <location>
        <begin position="315"/>
        <end position="325"/>
    </location>
</feature>
<feature type="turn" evidence="10">
    <location>
        <begin position="326"/>
        <end position="329"/>
    </location>
</feature>
<feature type="helix" evidence="10">
    <location>
        <begin position="331"/>
        <end position="333"/>
    </location>
</feature>
<feature type="strand" evidence="10">
    <location>
        <begin position="341"/>
        <end position="348"/>
    </location>
</feature>
<feature type="strand" evidence="10">
    <location>
        <begin position="365"/>
        <end position="383"/>
    </location>
</feature>
<feature type="turn" evidence="10">
    <location>
        <begin position="384"/>
        <end position="386"/>
    </location>
</feature>
<feature type="strand" evidence="10">
    <location>
        <begin position="390"/>
        <end position="395"/>
    </location>
</feature>
<feature type="turn" evidence="10">
    <location>
        <begin position="402"/>
        <end position="404"/>
    </location>
</feature>
<feature type="strand" evidence="10">
    <location>
        <begin position="407"/>
        <end position="414"/>
    </location>
</feature>
<keyword id="KW-0002">3D-structure</keyword>
<keyword id="KW-0025">Alternative splicing</keyword>
<keyword id="KW-0068">Autocatalytic cleavage</keyword>
<keyword id="KW-0903">Direct protein sequencing</keyword>
<keyword id="KW-0225">Disease variant</keyword>
<keyword id="KW-0378">Hydrolase</keyword>
<keyword id="KW-0645">Protease</keyword>
<keyword id="KW-1267">Proteomics identification</keyword>
<keyword id="KW-1185">Reference proteome</keyword>
<keyword id="KW-0888">Threonine protease</keyword>
<keyword id="KW-0865">Zymogen</keyword>
<dbReference type="EC" id="3.4.25.-"/>
<dbReference type="EMBL" id="AK000219">
    <property type="protein sequence ID" value="BAA91018.1"/>
    <property type="molecule type" value="mRNA"/>
</dbReference>
<dbReference type="EMBL" id="AK025671">
    <property type="protein sequence ID" value="BAB15209.1"/>
    <property type="molecule type" value="mRNA"/>
</dbReference>
<dbReference type="EMBL" id="AK299940">
    <property type="protein sequence ID" value="BAH13176.1"/>
    <property type="molecule type" value="mRNA"/>
</dbReference>
<dbReference type="EMBL" id="AK304488">
    <property type="protein sequence ID" value="BAH14199.1"/>
    <property type="molecule type" value="mRNA"/>
</dbReference>
<dbReference type="EMBL" id="AK316311">
    <property type="protein sequence ID" value="BAH14682.1"/>
    <property type="molecule type" value="mRNA"/>
</dbReference>
<dbReference type="EMBL" id="AL050320">
    <property type="status" value="NOT_ANNOTATED_CDS"/>
    <property type="molecule type" value="Genomic_DNA"/>
</dbReference>
<dbReference type="EMBL" id="AL121754">
    <property type="status" value="NOT_ANNOTATED_CDS"/>
    <property type="molecule type" value="Genomic_DNA"/>
</dbReference>
<dbReference type="EMBL" id="AL121782">
    <property type="status" value="NOT_ANNOTATED_CDS"/>
    <property type="molecule type" value="Genomic_DNA"/>
</dbReference>
<dbReference type="EMBL" id="AL133463">
    <property type="status" value="NOT_ANNOTATED_CDS"/>
    <property type="molecule type" value="Genomic_DNA"/>
</dbReference>
<dbReference type="EMBL" id="AL158089">
    <property type="status" value="NOT_ANNOTATED_CDS"/>
    <property type="molecule type" value="Genomic_DNA"/>
</dbReference>
<dbReference type="EMBL" id="BC025266">
    <property type="protein sequence ID" value="AAH25266.1"/>
    <property type="molecule type" value="mRNA"/>
</dbReference>
<dbReference type="CCDS" id="CCDS13116.1">
    <molecule id="Q9H6P5-1"/>
</dbReference>
<dbReference type="RefSeq" id="NP_060184.2">
    <molecule id="Q9H6P5-1"/>
    <property type="nucleotide sequence ID" value="NM_017714.3"/>
</dbReference>
<dbReference type="RefSeq" id="XP_047296223.1">
    <molecule id="Q9H6P5-1"/>
    <property type="nucleotide sequence ID" value="XM_047440267.1"/>
</dbReference>
<dbReference type="RefSeq" id="XP_047296224.1">
    <molecule id="Q9H6P5-1"/>
    <property type="nucleotide sequence ID" value="XM_047440268.1"/>
</dbReference>
<dbReference type="RefSeq" id="XP_054179622.1">
    <molecule id="Q9H6P5-1"/>
    <property type="nucleotide sequence ID" value="XM_054323647.1"/>
</dbReference>
<dbReference type="RefSeq" id="XP_054179623.1">
    <molecule id="Q9H6P5-1"/>
    <property type="nucleotide sequence ID" value="XM_054323648.1"/>
</dbReference>
<dbReference type="PDB" id="2A8I">
    <property type="method" value="X-ray"/>
    <property type="resolution" value="2.00 A"/>
    <property type="chains" value="A/B=1-420"/>
</dbReference>
<dbReference type="PDB" id="2A8J">
    <property type="method" value="X-ray"/>
    <property type="resolution" value="1.90 A"/>
    <property type="chains" value="A/B=1-420"/>
</dbReference>
<dbReference type="PDB" id="2A8L">
    <property type="method" value="X-ray"/>
    <property type="resolution" value="2.00 A"/>
    <property type="chains" value="A/B=1-420"/>
</dbReference>
<dbReference type="PDB" id="2A8M">
    <property type="method" value="X-ray"/>
    <property type="resolution" value="2.60 A"/>
    <property type="chains" value="A/B=1-420"/>
</dbReference>
<dbReference type="PDB" id="6UGK">
    <property type="method" value="X-ray"/>
    <property type="resolution" value="2.15 A"/>
    <property type="chains" value="A/B=41-183, A/B=234-416"/>
</dbReference>
<dbReference type="PDB" id="6VIN">
    <property type="method" value="X-ray"/>
    <property type="resolution" value="3.04 A"/>
    <property type="chains" value="A/B=41-416"/>
</dbReference>
<dbReference type="PDBsum" id="2A8I"/>
<dbReference type="PDBsum" id="2A8J"/>
<dbReference type="PDBsum" id="2A8L"/>
<dbReference type="PDBsum" id="2A8M"/>
<dbReference type="PDBsum" id="6UGK"/>
<dbReference type="PDBsum" id="6VIN"/>
<dbReference type="SMR" id="Q9H6P5"/>
<dbReference type="BioGRID" id="120757">
    <property type="interactions" value="14"/>
</dbReference>
<dbReference type="DIP" id="DIP-48456N"/>
<dbReference type="FunCoup" id="Q9H6P5">
    <property type="interactions" value="1345"/>
</dbReference>
<dbReference type="IntAct" id="Q9H6P5">
    <property type="interactions" value="2"/>
</dbReference>
<dbReference type="STRING" id="9606.ENSP00000338624"/>
<dbReference type="BindingDB" id="Q9H6P5"/>
<dbReference type="ChEMBL" id="CHEMBL6153"/>
<dbReference type="GuidetoPHARMACOLOGY" id="2419"/>
<dbReference type="MEROPS" id="T02.004"/>
<dbReference type="iPTMnet" id="Q9H6P5"/>
<dbReference type="MetOSite" id="Q9H6P5"/>
<dbReference type="PhosphoSitePlus" id="Q9H6P5"/>
<dbReference type="BioMuta" id="TASP1"/>
<dbReference type="DMDM" id="29839766"/>
<dbReference type="jPOST" id="Q9H6P5"/>
<dbReference type="MassIVE" id="Q9H6P5"/>
<dbReference type="PaxDb" id="9606-ENSP00000338624"/>
<dbReference type="PeptideAtlas" id="Q9H6P5"/>
<dbReference type="ProteomicsDB" id="6759"/>
<dbReference type="ProteomicsDB" id="7008"/>
<dbReference type="ProteomicsDB" id="81004">
    <molecule id="Q9H6P5-1"/>
</dbReference>
<dbReference type="Pumba" id="Q9H6P5"/>
<dbReference type="Antibodypedia" id="24250">
    <property type="antibodies" value="197 antibodies from 24 providers"/>
</dbReference>
<dbReference type="DNASU" id="55617"/>
<dbReference type="Ensembl" id="ENST00000337743.9">
    <molecule id="Q9H6P5-1"/>
    <property type="protein sequence ID" value="ENSP00000338624.4"/>
    <property type="gene ID" value="ENSG00000089123.16"/>
</dbReference>
<dbReference type="GeneID" id="55617"/>
<dbReference type="KEGG" id="hsa:55617"/>
<dbReference type="MANE-Select" id="ENST00000337743.9">
    <property type="protein sequence ID" value="ENSP00000338624.4"/>
    <property type="RefSeq nucleotide sequence ID" value="NM_017714.3"/>
    <property type="RefSeq protein sequence ID" value="NP_060184.2"/>
</dbReference>
<dbReference type="UCSC" id="uc002woi.4">
    <molecule id="Q9H6P5-1"/>
    <property type="organism name" value="human"/>
</dbReference>
<dbReference type="AGR" id="HGNC:15859"/>
<dbReference type="CTD" id="55617"/>
<dbReference type="DisGeNET" id="55617"/>
<dbReference type="GeneCards" id="TASP1"/>
<dbReference type="HGNC" id="HGNC:15859">
    <property type="gene designation" value="TASP1"/>
</dbReference>
<dbReference type="HPA" id="ENSG00000089123">
    <property type="expression patterns" value="Low tissue specificity"/>
</dbReference>
<dbReference type="MalaCards" id="TASP1"/>
<dbReference type="MIM" id="608270">
    <property type="type" value="gene"/>
</dbReference>
<dbReference type="MIM" id="618950">
    <property type="type" value="phenotype"/>
</dbReference>
<dbReference type="neXtProt" id="NX_Q9H6P5"/>
<dbReference type="OpenTargets" id="ENSG00000089123"/>
<dbReference type="PharmGKB" id="PA25671"/>
<dbReference type="VEuPathDB" id="HostDB:ENSG00000089123"/>
<dbReference type="eggNOG" id="KOG1592">
    <property type="taxonomic scope" value="Eukaryota"/>
</dbReference>
<dbReference type="GeneTree" id="ENSGT00950000183045"/>
<dbReference type="HOGENOM" id="CLU_021603_5_0_1"/>
<dbReference type="InParanoid" id="Q9H6P5"/>
<dbReference type="OMA" id="RLWCAFT"/>
<dbReference type="OrthoDB" id="77601at2759"/>
<dbReference type="PAN-GO" id="Q9H6P5">
    <property type="GO annotations" value="3 GO annotations based on evolutionary models"/>
</dbReference>
<dbReference type="PhylomeDB" id="Q9H6P5"/>
<dbReference type="TreeFam" id="TF106358"/>
<dbReference type="PathwayCommons" id="Q9H6P5"/>
<dbReference type="Reactome" id="R-HSA-9772755">
    <property type="pathway name" value="Formation of WDR5-containing histone-modifying complexes"/>
</dbReference>
<dbReference type="SignaLink" id="Q9H6P5"/>
<dbReference type="BioGRID-ORCS" id="55617">
    <property type="hits" value="12 hits in 1159 CRISPR screens"/>
</dbReference>
<dbReference type="CD-CODE" id="91857CE7">
    <property type="entry name" value="Nucleolus"/>
</dbReference>
<dbReference type="ChiTaRS" id="TASP1">
    <property type="organism name" value="human"/>
</dbReference>
<dbReference type="EvolutionaryTrace" id="Q9H6P5"/>
<dbReference type="GeneWiki" id="TASP1"/>
<dbReference type="GenomeRNAi" id="55617"/>
<dbReference type="Pharos" id="Q9H6P5">
    <property type="development level" value="Tchem"/>
</dbReference>
<dbReference type="PRO" id="PR:Q9H6P5"/>
<dbReference type="Proteomes" id="UP000005640">
    <property type="component" value="Chromosome 20"/>
</dbReference>
<dbReference type="RNAct" id="Q9H6P5">
    <property type="molecule type" value="protein"/>
</dbReference>
<dbReference type="Bgee" id="ENSG00000089123">
    <property type="expression patterns" value="Expressed in popliteal artery and 191 other cell types or tissues"/>
</dbReference>
<dbReference type="ExpressionAtlas" id="Q9H6P5">
    <property type="expression patterns" value="baseline and differential"/>
</dbReference>
<dbReference type="GO" id="GO:0005737">
    <property type="term" value="C:cytoplasm"/>
    <property type="evidence" value="ECO:0000318"/>
    <property type="project" value="GO_Central"/>
</dbReference>
<dbReference type="GO" id="GO:0005829">
    <property type="term" value="C:cytosol"/>
    <property type="evidence" value="ECO:0000304"/>
    <property type="project" value="Reactome"/>
</dbReference>
<dbReference type="GO" id="GO:0042802">
    <property type="term" value="F:identical protein binding"/>
    <property type="evidence" value="ECO:0000353"/>
    <property type="project" value="IntAct"/>
</dbReference>
<dbReference type="GO" id="GO:0004298">
    <property type="term" value="F:threonine-type endopeptidase activity"/>
    <property type="evidence" value="ECO:0000315"/>
    <property type="project" value="UniProtKB"/>
</dbReference>
<dbReference type="GO" id="GO:0045893">
    <property type="term" value="P:positive regulation of DNA-templated transcription"/>
    <property type="evidence" value="ECO:0000315"/>
    <property type="project" value="UniProtKB"/>
</dbReference>
<dbReference type="GO" id="GO:0051604">
    <property type="term" value="P:protein maturation"/>
    <property type="evidence" value="ECO:0000318"/>
    <property type="project" value="GO_Central"/>
</dbReference>
<dbReference type="GO" id="GO:0006508">
    <property type="term" value="P:proteolysis"/>
    <property type="evidence" value="ECO:0000315"/>
    <property type="project" value="CACAO"/>
</dbReference>
<dbReference type="CDD" id="cd04514">
    <property type="entry name" value="Taspase1_like"/>
    <property type="match status" value="1"/>
</dbReference>
<dbReference type="FunFam" id="3.60.20.30:FF:000002">
    <property type="entry name" value="Taspase, threonine aspartase, 1"/>
    <property type="match status" value="1"/>
</dbReference>
<dbReference type="Gene3D" id="3.60.20.30">
    <property type="entry name" value="(Glycosyl)asparaginase"/>
    <property type="match status" value="1"/>
</dbReference>
<dbReference type="InterPro" id="IPR029055">
    <property type="entry name" value="Ntn_hydrolases_N"/>
</dbReference>
<dbReference type="InterPro" id="IPR000246">
    <property type="entry name" value="Peptidase_T2"/>
</dbReference>
<dbReference type="InterPro" id="IPR037464">
    <property type="entry name" value="Taspase1"/>
</dbReference>
<dbReference type="PANTHER" id="PTHR10188">
    <property type="entry name" value="L-ASPARAGINASE"/>
    <property type="match status" value="1"/>
</dbReference>
<dbReference type="PANTHER" id="PTHR10188:SF8">
    <property type="entry name" value="THREONINE ASPARTASE 1"/>
    <property type="match status" value="1"/>
</dbReference>
<dbReference type="Pfam" id="PF01112">
    <property type="entry name" value="Asparaginase_2"/>
    <property type="match status" value="1"/>
</dbReference>
<dbReference type="SUPFAM" id="SSF56235">
    <property type="entry name" value="N-terminal nucleophile aminohydrolases (Ntn hydrolases)"/>
    <property type="match status" value="1"/>
</dbReference>
<comment type="function">
    <text evidence="1 3">Protease responsible for KMT2A/MLL1 processing and activation (PubMed:14636557). It also activates KMT2D/MLL2 (By similarity). Through substrate activation, it controls the expression of HOXA genes, and the expression of key cell cycle regulators including CCNA1, CCNB1, CCNE1 and CDKN2A (By similarity) (PubMed:14636557).</text>
</comment>
<comment type="subunit">
    <text evidence="8">Intramolecular proteolysis generates 2 subunits, alpha and beta, which reassemble through a non-covalent association to form the fully active enzyme.</text>
</comment>
<comment type="interaction">
    <interactant intactId="EBI-15557979">
        <id>Q9H6P5</id>
    </interactant>
    <interactant intactId="EBI-15557979">
        <id>Q9H6P5</id>
        <label>TASP1</label>
    </interactant>
    <organismsDiffer>false</organismsDiffer>
    <experiments>6</experiments>
</comment>
<comment type="alternative products">
    <event type="alternative splicing"/>
    <isoform>
        <id>Q9H6P5-1</id>
        <name>1</name>
        <sequence type="displayed"/>
    </isoform>
    <isoform>
        <id>Q9H6P5-2</id>
        <name>2</name>
        <sequence type="described" ref="VSP_056327 VSP_056328"/>
    </isoform>
    <isoform>
        <id>Q9H6P5-3</id>
        <name>3</name>
        <sequence type="described" ref="VSP_056533 VSP_056534"/>
    </isoform>
</comment>
<comment type="disease" evidence="5">
    <disease id="DI-05876">
        <name>Suleiman-El-Hattab syndrome</name>
        <acronym>SULEHS</acronym>
        <description>An autosomal recessive syndrome characterized by global developmental delay with poor expressive language, poor fine motor skills and hypotonia, microcephaly, feeding difficulties with failure to thrive, recurrent respiratory infections, cardiovascular malformations, cryptorchidism, happy demeanor, and facial dysmorphism. Distinctive facial features are excessive forehead hair, arched and thick eyebrows with synophrys, epicanthus, hypertelorism, thick eyelids with periorbital fullness, broad nasal bridge, long and smooth philtrum, thin upper lip, and low set prominent ears.</description>
        <dbReference type="MIM" id="618950"/>
    </disease>
    <text>The disease is caused by variants affecting the gene represented in this entry.</text>
</comment>
<comment type="similarity">
    <text evidence="7">Belongs to the Ntn-hydrolase family.</text>
</comment>
<reference key="1">
    <citation type="journal article" date="2004" name="Nat. Genet.">
        <title>Complete sequencing and characterization of 21,243 full-length human cDNAs.</title>
        <authorList>
            <person name="Ota T."/>
            <person name="Suzuki Y."/>
            <person name="Nishikawa T."/>
            <person name="Otsuki T."/>
            <person name="Sugiyama T."/>
            <person name="Irie R."/>
            <person name="Wakamatsu A."/>
            <person name="Hayashi K."/>
            <person name="Sato H."/>
            <person name="Nagai K."/>
            <person name="Kimura K."/>
            <person name="Makita H."/>
            <person name="Sekine M."/>
            <person name="Obayashi M."/>
            <person name="Nishi T."/>
            <person name="Shibahara T."/>
            <person name="Tanaka T."/>
            <person name="Ishii S."/>
            <person name="Yamamoto J."/>
            <person name="Saito K."/>
            <person name="Kawai Y."/>
            <person name="Isono Y."/>
            <person name="Nakamura Y."/>
            <person name="Nagahari K."/>
            <person name="Murakami K."/>
            <person name="Yasuda T."/>
            <person name="Iwayanagi T."/>
            <person name="Wagatsuma M."/>
            <person name="Shiratori A."/>
            <person name="Sudo H."/>
            <person name="Hosoiri T."/>
            <person name="Kaku Y."/>
            <person name="Kodaira H."/>
            <person name="Kondo H."/>
            <person name="Sugawara M."/>
            <person name="Takahashi M."/>
            <person name="Kanda K."/>
            <person name="Yokoi T."/>
            <person name="Furuya T."/>
            <person name="Kikkawa E."/>
            <person name="Omura Y."/>
            <person name="Abe K."/>
            <person name="Kamihara K."/>
            <person name="Katsuta N."/>
            <person name="Sato K."/>
            <person name="Tanikawa M."/>
            <person name="Yamazaki M."/>
            <person name="Ninomiya K."/>
            <person name="Ishibashi T."/>
            <person name="Yamashita H."/>
            <person name="Murakawa K."/>
            <person name="Fujimori K."/>
            <person name="Tanai H."/>
            <person name="Kimata M."/>
            <person name="Watanabe M."/>
            <person name="Hiraoka S."/>
            <person name="Chiba Y."/>
            <person name="Ishida S."/>
            <person name="Ono Y."/>
            <person name="Takiguchi S."/>
            <person name="Watanabe S."/>
            <person name="Yosida M."/>
            <person name="Hotuta T."/>
            <person name="Kusano J."/>
            <person name="Kanehori K."/>
            <person name="Takahashi-Fujii A."/>
            <person name="Hara H."/>
            <person name="Tanase T.-O."/>
            <person name="Nomura Y."/>
            <person name="Togiya S."/>
            <person name="Komai F."/>
            <person name="Hara R."/>
            <person name="Takeuchi K."/>
            <person name="Arita M."/>
            <person name="Imose N."/>
            <person name="Musashino K."/>
            <person name="Yuuki H."/>
            <person name="Oshima A."/>
            <person name="Sasaki N."/>
            <person name="Aotsuka S."/>
            <person name="Yoshikawa Y."/>
            <person name="Matsunawa H."/>
            <person name="Ichihara T."/>
            <person name="Shiohata N."/>
            <person name="Sano S."/>
            <person name="Moriya S."/>
            <person name="Momiyama H."/>
            <person name="Satoh N."/>
            <person name="Takami S."/>
            <person name="Terashima Y."/>
            <person name="Suzuki O."/>
            <person name="Nakagawa S."/>
            <person name="Senoh A."/>
            <person name="Mizoguchi H."/>
            <person name="Goto Y."/>
            <person name="Shimizu F."/>
            <person name="Wakebe H."/>
            <person name="Hishigaki H."/>
            <person name="Watanabe T."/>
            <person name="Sugiyama A."/>
            <person name="Takemoto M."/>
            <person name="Kawakami B."/>
            <person name="Yamazaki M."/>
            <person name="Watanabe K."/>
            <person name="Kumagai A."/>
            <person name="Itakura S."/>
            <person name="Fukuzumi Y."/>
            <person name="Fujimori Y."/>
            <person name="Komiyama M."/>
            <person name="Tashiro H."/>
            <person name="Tanigami A."/>
            <person name="Fujiwara T."/>
            <person name="Ono T."/>
            <person name="Yamada K."/>
            <person name="Fujii Y."/>
            <person name="Ozaki K."/>
            <person name="Hirao M."/>
            <person name="Ohmori Y."/>
            <person name="Kawabata A."/>
            <person name="Hikiji T."/>
            <person name="Kobatake N."/>
            <person name="Inagaki H."/>
            <person name="Ikema Y."/>
            <person name="Okamoto S."/>
            <person name="Okitani R."/>
            <person name="Kawakami T."/>
            <person name="Noguchi S."/>
            <person name="Itoh T."/>
            <person name="Shigeta K."/>
            <person name="Senba T."/>
            <person name="Matsumura K."/>
            <person name="Nakajima Y."/>
            <person name="Mizuno T."/>
            <person name="Morinaga M."/>
            <person name="Sasaki M."/>
            <person name="Togashi T."/>
            <person name="Oyama M."/>
            <person name="Hata H."/>
            <person name="Watanabe M."/>
            <person name="Komatsu T."/>
            <person name="Mizushima-Sugano J."/>
            <person name="Satoh T."/>
            <person name="Shirai Y."/>
            <person name="Takahashi Y."/>
            <person name="Nakagawa K."/>
            <person name="Okumura K."/>
            <person name="Nagase T."/>
            <person name="Nomura N."/>
            <person name="Kikuchi H."/>
            <person name="Masuho Y."/>
            <person name="Yamashita R."/>
            <person name="Nakai K."/>
            <person name="Yada T."/>
            <person name="Nakamura Y."/>
            <person name="Ohara O."/>
            <person name="Isogai T."/>
            <person name="Sugano S."/>
        </authorList>
    </citation>
    <scope>NUCLEOTIDE SEQUENCE [LARGE SCALE MRNA] (ISOFORMS 1; 2 AND 3)</scope>
    <source>
        <tissue>Brain</tissue>
        <tissue>Colon mucosa</tissue>
        <tissue>Hepatoma</tissue>
        <tissue>Uterus</tissue>
    </source>
</reference>
<reference key="2">
    <citation type="journal article" date="2001" name="Nature">
        <title>The DNA sequence and comparative analysis of human chromosome 20.</title>
        <authorList>
            <person name="Deloukas P."/>
            <person name="Matthews L.H."/>
            <person name="Ashurst J.L."/>
            <person name="Burton J."/>
            <person name="Gilbert J.G.R."/>
            <person name="Jones M."/>
            <person name="Stavrides G."/>
            <person name="Almeida J.P."/>
            <person name="Babbage A.K."/>
            <person name="Bagguley C.L."/>
            <person name="Bailey J."/>
            <person name="Barlow K.F."/>
            <person name="Bates K.N."/>
            <person name="Beard L.M."/>
            <person name="Beare D.M."/>
            <person name="Beasley O.P."/>
            <person name="Bird C.P."/>
            <person name="Blakey S.E."/>
            <person name="Bridgeman A.M."/>
            <person name="Brown A.J."/>
            <person name="Buck D."/>
            <person name="Burrill W.D."/>
            <person name="Butler A.P."/>
            <person name="Carder C."/>
            <person name="Carter N.P."/>
            <person name="Chapman J.C."/>
            <person name="Clamp M."/>
            <person name="Clark G."/>
            <person name="Clark L.N."/>
            <person name="Clark S.Y."/>
            <person name="Clee C.M."/>
            <person name="Clegg S."/>
            <person name="Cobley V.E."/>
            <person name="Collier R.E."/>
            <person name="Connor R.E."/>
            <person name="Corby N.R."/>
            <person name="Coulson A."/>
            <person name="Coville G.J."/>
            <person name="Deadman R."/>
            <person name="Dhami P.D."/>
            <person name="Dunn M."/>
            <person name="Ellington A.G."/>
            <person name="Frankland J.A."/>
            <person name="Fraser A."/>
            <person name="French L."/>
            <person name="Garner P."/>
            <person name="Grafham D.V."/>
            <person name="Griffiths C."/>
            <person name="Griffiths M.N.D."/>
            <person name="Gwilliam R."/>
            <person name="Hall R.E."/>
            <person name="Hammond S."/>
            <person name="Harley J.L."/>
            <person name="Heath P.D."/>
            <person name="Ho S."/>
            <person name="Holden J.L."/>
            <person name="Howden P.J."/>
            <person name="Huckle E."/>
            <person name="Hunt A.R."/>
            <person name="Hunt S.E."/>
            <person name="Jekosch K."/>
            <person name="Johnson C.M."/>
            <person name="Johnson D."/>
            <person name="Kay M.P."/>
            <person name="Kimberley A.M."/>
            <person name="King A."/>
            <person name="Knights A."/>
            <person name="Laird G.K."/>
            <person name="Lawlor S."/>
            <person name="Lehvaeslaiho M.H."/>
            <person name="Leversha M.A."/>
            <person name="Lloyd C."/>
            <person name="Lloyd D.M."/>
            <person name="Lovell J.D."/>
            <person name="Marsh V.L."/>
            <person name="Martin S.L."/>
            <person name="McConnachie L.J."/>
            <person name="McLay K."/>
            <person name="McMurray A.A."/>
            <person name="Milne S.A."/>
            <person name="Mistry D."/>
            <person name="Moore M.J.F."/>
            <person name="Mullikin J.C."/>
            <person name="Nickerson T."/>
            <person name="Oliver K."/>
            <person name="Parker A."/>
            <person name="Patel R."/>
            <person name="Pearce T.A.V."/>
            <person name="Peck A.I."/>
            <person name="Phillimore B.J.C.T."/>
            <person name="Prathalingam S.R."/>
            <person name="Plumb R.W."/>
            <person name="Ramsay H."/>
            <person name="Rice C.M."/>
            <person name="Ross M.T."/>
            <person name="Scott C.E."/>
            <person name="Sehra H.K."/>
            <person name="Shownkeen R."/>
            <person name="Sims S."/>
            <person name="Skuce C.D."/>
            <person name="Smith M.L."/>
            <person name="Soderlund C."/>
            <person name="Steward C.A."/>
            <person name="Sulston J.E."/>
            <person name="Swann R.M."/>
            <person name="Sycamore N."/>
            <person name="Taylor R."/>
            <person name="Tee L."/>
            <person name="Thomas D.W."/>
            <person name="Thorpe A."/>
            <person name="Tracey A."/>
            <person name="Tromans A.C."/>
            <person name="Vaudin M."/>
            <person name="Wall M."/>
            <person name="Wallis J.M."/>
            <person name="Whitehead S.L."/>
            <person name="Whittaker P."/>
            <person name="Willey D.L."/>
            <person name="Williams L."/>
            <person name="Williams S.A."/>
            <person name="Wilming L."/>
            <person name="Wray P.W."/>
            <person name="Hubbard T."/>
            <person name="Durbin R.M."/>
            <person name="Bentley D.R."/>
            <person name="Beck S."/>
            <person name="Rogers J."/>
        </authorList>
    </citation>
    <scope>NUCLEOTIDE SEQUENCE [LARGE SCALE GENOMIC DNA]</scope>
</reference>
<reference key="3">
    <citation type="journal article" date="2004" name="Genome Res.">
        <title>The status, quality, and expansion of the NIH full-length cDNA project: the Mammalian Gene Collection (MGC).</title>
        <authorList>
            <consortium name="The MGC Project Team"/>
        </authorList>
    </citation>
    <scope>NUCLEOTIDE SEQUENCE [LARGE SCALE MRNA] (ISOFORM 1)</scope>
    <source>
        <tissue>Ovary</tissue>
    </source>
</reference>
<reference key="4">
    <citation type="journal article" date="2003" name="Cell">
        <title>Taspase1: a threonine aspartase required for cleavage of MLL and proper HOX gene expression.</title>
        <authorList>
            <person name="Hsieh J.J.-D."/>
            <person name="Cheng E.H.-Y."/>
            <person name="Korsmeyer S.J."/>
        </authorList>
    </citation>
    <scope>PROTEIN SEQUENCE OF 124-145</scope>
    <scope>FUNCTION</scope>
    <scope>MUTAGENESIS OF ASP-233 AND THR-234</scope>
</reference>
<reference key="5">
    <citation type="journal article" date="2019" name="Hum. Mutat.">
        <title>Homozygous loss-of-function variants of TASP1, a gene encoding an activator of the histone methyltransferases KMT2A and KMT2D, cause a syndrome of developmental delay, happy demeanor, distinctive facial features, and congenital anomalies.</title>
        <authorList>
            <person name="Suleiman J."/>
            <person name="Riedhammer K.M."/>
            <person name="Jicinsky T."/>
            <person name="Mundt M."/>
            <person name="Werner L."/>
            <person name="Gusic M."/>
            <person name="Burgemeister A.L."/>
            <person name="Alsaif H.S."/>
            <person name="Abdulrahim M."/>
            <person name="Moghrabi N.N."/>
            <person name="Nicolas-Jilwan M."/>
            <person name="Alsayed M."/>
            <person name="Bi W."/>
            <person name="Sampath S."/>
            <person name="Alkuraya F.S."/>
            <person name="El-Hattab A.W."/>
        </authorList>
    </citation>
    <scope>INVOLVEMENT IN SULEHS</scope>
    <scope>VARIANTS SULEHS 67-ARG--ASN-420 DEL AND MET-234</scope>
</reference>
<reference key="6">
    <citation type="journal article" date="2005" name="Structure">
        <title>Crystal structure of human Taspase1, a crucial protease regulating the function of MLL.</title>
        <authorList>
            <person name="Khan J.A."/>
            <person name="Dunn B.M."/>
            <person name="Tong L."/>
        </authorList>
    </citation>
    <scope>X-RAY CRYSTALLOGRAPHY (1.9 ANGSTROMS)</scope>
    <scope>ACTIVE SITE</scope>
    <scope>SUBUNIT</scope>
    <scope>MUTAGENESIS OF THR-234</scope>
</reference>
<gene>
    <name type="primary">TASP1</name>
    <name type="synonym">C20orf13</name>
</gene>